<keyword id="KW-0560">Oxidoreductase</keyword>
<keyword id="KW-1185">Reference proteome</keyword>
<reference key="1">
    <citation type="journal article" date="2003" name="Proc. Natl. Acad. Sci. U.S.A.">
        <title>Genome sequence of the cyanobacterium Prochlorococcus marinus SS120, a nearly minimal oxyphototrophic genome.</title>
        <authorList>
            <person name="Dufresne A."/>
            <person name="Salanoubat M."/>
            <person name="Partensky F."/>
            <person name="Artiguenave F."/>
            <person name="Axmann I.M."/>
            <person name="Barbe V."/>
            <person name="Duprat S."/>
            <person name="Galperin M.Y."/>
            <person name="Koonin E.V."/>
            <person name="Le Gall F."/>
            <person name="Makarova K.S."/>
            <person name="Ostrowski M."/>
            <person name="Oztas S."/>
            <person name="Robert C."/>
            <person name="Rogozin I.B."/>
            <person name="Scanlan D.J."/>
            <person name="Tandeau de Marsac N."/>
            <person name="Weissenbach J."/>
            <person name="Wincker P."/>
            <person name="Wolf Y.I."/>
            <person name="Hess W.R."/>
        </authorList>
    </citation>
    <scope>NUCLEOTIDE SEQUENCE [LARGE SCALE GENOMIC DNA]</scope>
    <source>
        <strain>SARG / CCMP1375 / SS120</strain>
    </source>
</reference>
<sequence length="247" mass="28253">MFAKSFPLNPFLESVADRIRERVKGLTGVESLELAPDLKNIYGKTDGEDFFIFNELHQSRGFRKLHIETAVFEPSLEILHVVFFPDPAFDLPIFGVDLIAVPQGISAAIVDLSPVRDKLPRTIENQLAQIEIPSFEKVRKLPDWGDIFSSHVQFITPIGAEENGFFLDLVDKFLTILIDYSESIEPDLDDSPFTIERIEGQMYYCLQQKQNDKTRNVLAKAFSPNWANQYIEMVLFDMPVHTKNLDN</sequence>
<dbReference type="EC" id="1.3.7.5"/>
<dbReference type="EMBL" id="AE017126">
    <property type="protein sequence ID" value="AAP99863.1"/>
    <property type="molecule type" value="Genomic_DNA"/>
</dbReference>
<dbReference type="RefSeq" id="NP_875211.1">
    <property type="nucleotide sequence ID" value="NC_005042.1"/>
</dbReference>
<dbReference type="RefSeq" id="WP_011124971.1">
    <property type="nucleotide sequence ID" value="NC_005042.1"/>
</dbReference>
<dbReference type="SMR" id="Q7VCC2"/>
<dbReference type="STRING" id="167539.Pro_0819"/>
<dbReference type="EnsemblBacteria" id="AAP99863">
    <property type="protein sequence ID" value="AAP99863"/>
    <property type="gene ID" value="Pro_0819"/>
</dbReference>
<dbReference type="KEGG" id="pma:Pro_0819"/>
<dbReference type="PATRIC" id="fig|167539.5.peg.866"/>
<dbReference type="eggNOG" id="ENOG502Z7RN">
    <property type="taxonomic scope" value="Bacteria"/>
</dbReference>
<dbReference type="HOGENOM" id="CLU_074224_0_0_3"/>
<dbReference type="OrthoDB" id="581340at2"/>
<dbReference type="Proteomes" id="UP000001420">
    <property type="component" value="Chromosome"/>
</dbReference>
<dbReference type="GO" id="GO:0050897">
    <property type="term" value="F:cobalt ion binding"/>
    <property type="evidence" value="ECO:0007669"/>
    <property type="project" value="InterPro"/>
</dbReference>
<dbReference type="GO" id="GO:0050620">
    <property type="term" value="F:phycocyanobilin:ferredoxin oxidoreductase activity"/>
    <property type="evidence" value="ECO:0007669"/>
    <property type="project" value="UniProtKB-UniRule"/>
</dbReference>
<dbReference type="GO" id="GO:0010024">
    <property type="term" value="P:phytochromobilin biosynthetic process"/>
    <property type="evidence" value="ECO:0007669"/>
    <property type="project" value="InterPro"/>
</dbReference>
<dbReference type="Gene3D" id="3.40.1500.20">
    <property type="match status" value="1"/>
</dbReference>
<dbReference type="HAMAP" id="MF_00618">
    <property type="entry name" value="Ferredoxin_bilin_red"/>
    <property type="match status" value="1"/>
</dbReference>
<dbReference type="InterPro" id="IPR009249">
    <property type="entry name" value="Ferredoxin-dep_bilin_Rdtase"/>
</dbReference>
<dbReference type="InterPro" id="IPR022870">
    <property type="entry name" value="Ferredoxin_bilin_OxRdtase"/>
</dbReference>
<dbReference type="NCBIfam" id="NF002760">
    <property type="entry name" value="PRK02816.1"/>
    <property type="match status" value="1"/>
</dbReference>
<dbReference type="PANTHER" id="PTHR34557">
    <property type="entry name" value="PHYTOCHROMOBILIN:FERREDOXIN OXIDOREDUCTASE, CHLOROPLASTIC"/>
    <property type="match status" value="1"/>
</dbReference>
<dbReference type="PANTHER" id="PTHR34557:SF1">
    <property type="entry name" value="PHYTOCHROMOBILIN:FERREDOXIN OXIDOREDUCTASE, CHLOROPLASTIC"/>
    <property type="match status" value="1"/>
</dbReference>
<dbReference type="Pfam" id="PF05996">
    <property type="entry name" value="Fe_bilin_red"/>
    <property type="match status" value="1"/>
</dbReference>
<organism>
    <name type="scientific">Prochlorococcus marinus (strain SARG / CCMP1375 / SS120)</name>
    <dbReference type="NCBI Taxonomy" id="167539"/>
    <lineage>
        <taxon>Bacteria</taxon>
        <taxon>Bacillati</taxon>
        <taxon>Cyanobacteriota</taxon>
        <taxon>Cyanophyceae</taxon>
        <taxon>Synechococcales</taxon>
        <taxon>Prochlorococcaceae</taxon>
        <taxon>Prochlorococcus</taxon>
    </lineage>
</organism>
<evidence type="ECO:0000250" key="1"/>
<evidence type="ECO:0000305" key="2"/>
<gene>
    <name type="primary">pcyA</name>
    <name type="ordered locus">Pro_0819</name>
</gene>
<comment type="function">
    <text evidence="1">Catalyzes the four-electron reduction of biliverdin IX-alpha (2-electron reduction at both the A and D rings); the reaction proceeds via an isolatable 2-electron intermediate, 181,182-dihydrobiliverdin.</text>
</comment>
<comment type="catalytic activity">
    <reaction>
        <text>(2R,3Z)-phycocyanobilin + 4 oxidized [2Fe-2S]-[ferredoxin] = biliverdin IXalpha + 4 reduced [2Fe-2S]-[ferredoxin] + 4 H(+)</text>
        <dbReference type="Rhea" id="RHEA:15309"/>
        <dbReference type="Rhea" id="RHEA-COMP:10000"/>
        <dbReference type="Rhea" id="RHEA-COMP:10001"/>
        <dbReference type="ChEBI" id="CHEBI:15378"/>
        <dbReference type="ChEBI" id="CHEBI:33737"/>
        <dbReference type="ChEBI" id="CHEBI:33738"/>
        <dbReference type="ChEBI" id="CHEBI:57437"/>
        <dbReference type="ChEBI" id="CHEBI:57991"/>
        <dbReference type="EC" id="1.3.7.5"/>
    </reaction>
</comment>
<comment type="similarity">
    <text evidence="2">Belongs to the HY2 family.</text>
</comment>
<feature type="chain" id="PRO_0000216741" description="Phycocyanobilin:ferredoxin oxidoreductase">
    <location>
        <begin position="1"/>
        <end position="247"/>
    </location>
</feature>
<protein>
    <recommendedName>
        <fullName>Phycocyanobilin:ferredoxin oxidoreductase</fullName>
        <ecNumber>1.3.7.5</ecNumber>
    </recommendedName>
</protein>
<accession>Q7VCC2</accession>
<proteinExistence type="inferred from homology"/>
<name>PCYA_PROMA</name>